<accession>Q2NQY2</accession>
<reference key="1">
    <citation type="journal article" date="2006" name="Genome Res.">
        <title>Massive genome erosion and functional adaptations provide insights into the symbiotic lifestyle of Sodalis glossinidius in the tsetse host.</title>
        <authorList>
            <person name="Toh H."/>
            <person name="Weiss B.L."/>
            <person name="Perkin S.A.H."/>
            <person name="Yamashita A."/>
            <person name="Oshima K."/>
            <person name="Hattori M."/>
            <person name="Aksoy S."/>
        </authorList>
    </citation>
    <scope>NUCLEOTIDE SEQUENCE [LARGE SCALE GENOMIC DNA]</scope>
    <source>
        <strain>morsitans</strain>
    </source>
</reference>
<dbReference type="EC" id="3.4.25.2" evidence="1"/>
<dbReference type="EMBL" id="AP008232">
    <property type="protein sequence ID" value="BAE75443.1"/>
    <property type="molecule type" value="Genomic_DNA"/>
</dbReference>
<dbReference type="RefSeq" id="WP_011411980.1">
    <property type="nucleotide sequence ID" value="NC_007712.1"/>
</dbReference>
<dbReference type="SMR" id="Q2NQY2"/>
<dbReference type="STRING" id="343509.SG2168"/>
<dbReference type="MEROPS" id="T01.006"/>
<dbReference type="KEGG" id="sgl:SG2168"/>
<dbReference type="eggNOG" id="COG5405">
    <property type="taxonomic scope" value="Bacteria"/>
</dbReference>
<dbReference type="HOGENOM" id="CLU_093872_1_0_6"/>
<dbReference type="OrthoDB" id="9804884at2"/>
<dbReference type="BioCyc" id="SGLO343509:SGP1_RS20015-MONOMER"/>
<dbReference type="Proteomes" id="UP000001932">
    <property type="component" value="Chromosome"/>
</dbReference>
<dbReference type="GO" id="GO:0009376">
    <property type="term" value="C:HslUV protease complex"/>
    <property type="evidence" value="ECO:0007669"/>
    <property type="project" value="UniProtKB-UniRule"/>
</dbReference>
<dbReference type="GO" id="GO:0005839">
    <property type="term" value="C:proteasome core complex"/>
    <property type="evidence" value="ECO:0007669"/>
    <property type="project" value="InterPro"/>
</dbReference>
<dbReference type="GO" id="GO:0046872">
    <property type="term" value="F:metal ion binding"/>
    <property type="evidence" value="ECO:0007669"/>
    <property type="project" value="UniProtKB-KW"/>
</dbReference>
<dbReference type="GO" id="GO:0004298">
    <property type="term" value="F:threonine-type endopeptidase activity"/>
    <property type="evidence" value="ECO:0007669"/>
    <property type="project" value="UniProtKB-KW"/>
</dbReference>
<dbReference type="GO" id="GO:0051603">
    <property type="term" value="P:proteolysis involved in protein catabolic process"/>
    <property type="evidence" value="ECO:0007669"/>
    <property type="project" value="InterPro"/>
</dbReference>
<dbReference type="CDD" id="cd01913">
    <property type="entry name" value="protease_HslV"/>
    <property type="match status" value="1"/>
</dbReference>
<dbReference type="FunFam" id="3.60.20.10:FF:000002">
    <property type="entry name" value="ATP-dependent protease subunit HslV"/>
    <property type="match status" value="1"/>
</dbReference>
<dbReference type="Gene3D" id="3.60.20.10">
    <property type="entry name" value="Glutamine Phosphoribosylpyrophosphate, subunit 1, domain 1"/>
    <property type="match status" value="1"/>
</dbReference>
<dbReference type="HAMAP" id="MF_00248">
    <property type="entry name" value="HslV"/>
    <property type="match status" value="1"/>
</dbReference>
<dbReference type="InterPro" id="IPR022281">
    <property type="entry name" value="ATP-dep_Prtase_HsIV_su"/>
</dbReference>
<dbReference type="InterPro" id="IPR029055">
    <property type="entry name" value="Ntn_hydrolases_N"/>
</dbReference>
<dbReference type="InterPro" id="IPR001353">
    <property type="entry name" value="Proteasome_sua/b"/>
</dbReference>
<dbReference type="InterPro" id="IPR023333">
    <property type="entry name" value="Proteasome_suB-type"/>
</dbReference>
<dbReference type="NCBIfam" id="TIGR03692">
    <property type="entry name" value="ATP_dep_HslV"/>
    <property type="match status" value="1"/>
</dbReference>
<dbReference type="NCBIfam" id="NF003964">
    <property type="entry name" value="PRK05456.1"/>
    <property type="match status" value="1"/>
</dbReference>
<dbReference type="PANTHER" id="PTHR32194:SF0">
    <property type="entry name" value="ATP-DEPENDENT PROTEASE SUBUNIT HSLV"/>
    <property type="match status" value="1"/>
</dbReference>
<dbReference type="PANTHER" id="PTHR32194">
    <property type="entry name" value="METALLOPROTEASE TLDD"/>
    <property type="match status" value="1"/>
</dbReference>
<dbReference type="Pfam" id="PF00227">
    <property type="entry name" value="Proteasome"/>
    <property type="match status" value="1"/>
</dbReference>
<dbReference type="PIRSF" id="PIRSF039093">
    <property type="entry name" value="HslV"/>
    <property type="match status" value="1"/>
</dbReference>
<dbReference type="SUPFAM" id="SSF56235">
    <property type="entry name" value="N-terminal nucleophile aminohydrolases (Ntn hydrolases)"/>
    <property type="match status" value="1"/>
</dbReference>
<dbReference type="PROSITE" id="PS51476">
    <property type="entry name" value="PROTEASOME_BETA_2"/>
    <property type="match status" value="1"/>
</dbReference>
<gene>
    <name evidence="1" type="primary">hslV</name>
    <name type="ordered locus">SG2168</name>
</gene>
<comment type="function">
    <text evidence="1">Protease subunit of a proteasome-like degradation complex believed to be a general protein degrading machinery.</text>
</comment>
<comment type="catalytic activity">
    <reaction evidence="1">
        <text>ATP-dependent cleavage of peptide bonds with broad specificity.</text>
        <dbReference type="EC" id="3.4.25.2"/>
    </reaction>
</comment>
<comment type="activity regulation">
    <text evidence="1">Allosterically activated by HslU binding.</text>
</comment>
<comment type="subunit">
    <text evidence="1">A double ring-shaped homohexamer of HslV is capped on each side by a ring-shaped HslU homohexamer. The assembly of the HslU/HslV complex is dependent on binding of ATP.</text>
</comment>
<comment type="subcellular location">
    <subcellularLocation>
        <location evidence="1">Cytoplasm</location>
    </subcellularLocation>
</comment>
<comment type="similarity">
    <text evidence="1">Belongs to the peptidase T1B family. HslV subfamily.</text>
</comment>
<feature type="chain" id="PRO_1000012678" description="ATP-dependent protease subunit HslV">
    <location>
        <begin position="1"/>
        <end position="182"/>
    </location>
</feature>
<feature type="active site" evidence="1">
    <location>
        <position position="2"/>
    </location>
</feature>
<feature type="binding site" evidence="1">
    <location>
        <position position="157"/>
    </location>
    <ligand>
        <name>Na(+)</name>
        <dbReference type="ChEBI" id="CHEBI:29101"/>
    </ligand>
</feature>
<feature type="binding site" evidence="1">
    <location>
        <position position="160"/>
    </location>
    <ligand>
        <name>Na(+)</name>
        <dbReference type="ChEBI" id="CHEBI:29101"/>
    </ligand>
</feature>
<feature type="binding site" evidence="1">
    <location>
        <position position="163"/>
    </location>
    <ligand>
        <name>Na(+)</name>
        <dbReference type="ChEBI" id="CHEBI:29101"/>
    </ligand>
</feature>
<sequence length="182" mass="19728">MTTIVSVRRKGHVVIGGDGQATLGNTVMKGNVRKVRRLYNDKVIAGFAGGTADAFTLFELFERKLEVHQGHLVKAAVELAKDWRTDRMLRRLEALLAVANESDSLIITGNGDVIQPENDLIAIGSGGPYAQSAARALLENTELGAREIVEKALGIAGDICIYTNQFHTIEELTSKAKDPENV</sequence>
<protein>
    <recommendedName>
        <fullName evidence="1">ATP-dependent protease subunit HslV</fullName>
        <ecNumber evidence="1">3.4.25.2</ecNumber>
    </recommendedName>
</protein>
<evidence type="ECO:0000255" key="1">
    <source>
        <dbReference type="HAMAP-Rule" id="MF_00248"/>
    </source>
</evidence>
<keyword id="KW-0021">Allosteric enzyme</keyword>
<keyword id="KW-0963">Cytoplasm</keyword>
<keyword id="KW-0378">Hydrolase</keyword>
<keyword id="KW-0479">Metal-binding</keyword>
<keyword id="KW-0645">Protease</keyword>
<keyword id="KW-0915">Sodium</keyword>
<keyword id="KW-0346">Stress response</keyword>
<keyword id="KW-0888">Threonine protease</keyword>
<proteinExistence type="inferred from homology"/>
<organism>
    <name type="scientific">Sodalis glossinidius (strain morsitans)</name>
    <dbReference type="NCBI Taxonomy" id="343509"/>
    <lineage>
        <taxon>Bacteria</taxon>
        <taxon>Pseudomonadati</taxon>
        <taxon>Pseudomonadota</taxon>
        <taxon>Gammaproteobacteria</taxon>
        <taxon>Enterobacterales</taxon>
        <taxon>Bruguierivoracaceae</taxon>
        <taxon>Sodalis</taxon>
    </lineage>
</organism>
<name>HSLV_SODGM</name>